<name>SERP1_LACLM</name>
<reference key="1">
    <citation type="journal article" date="2007" name="J. Bacteriol.">
        <title>The complete genome sequence of the lactic acid bacterial paradigm Lactococcus lactis subsp. cremoris MG1363.</title>
        <authorList>
            <person name="Wegmann U."/>
            <person name="O'Connell-Motherway M."/>
            <person name="Zomer A."/>
            <person name="Buist G."/>
            <person name="Shearman C."/>
            <person name="Canchaya C."/>
            <person name="Ventura M."/>
            <person name="Goesmann A."/>
            <person name="Gasson M.J."/>
            <person name="Kuipers O.P."/>
            <person name="van Sinderen D."/>
            <person name="Kok J."/>
        </authorList>
    </citation>
    <scope>NUCLEOTIDE SEQUENCE [LARGE SCALE GENOMIC DNA]</scope>
    <source>
        <strain>MG1363</strain>
    </source>
</reference>
<reference key="2">
    <citation type="journal article" date="2013" name="J. Bacteriol.">
        <title>Cloning, expression, and functional characterization of secondary amino acid transporters of Lactococcus lactis.</title>
        <authorList>
            <person name="Trip H."/>
            <person name="Mulder N.L."/>
            <person name="Lolkema J.S."/>
        </authorList>
    </citation>
    <scope>FUNCTION</scope>
    <source>
        <strain>MG1363</strain>
    </source>
</reference>
<reference key="3">
    <citation type="journal article" date="2015" name="J. Bacteriol.">
        <title>Physiology and substrate specificity of two closely related amino acid transporters, SerP1 and SerP2, of Lactococcus lactis.</title>
        <authorList>
            <person name="Noens E.E."/>
            <person name="Lolkema J.S."/>
        </authorList>
    </citation>
    <scope>FUNCTION</scope>
    <scope>BIOPHYSICOCHEMICAL PROPERTIES</scope>
    <scope>DISRUPTION PHENOTYPE</scope>
    <source>
        <strain>MG1363</strain>
    </source>
</reference>
<evidence type="ECO:0000255" key="1"/>
<evidence type="ECO:0000269" key="2">
    <source>
    </source>
</evidence>
<evidence type="ECO:0000269" key="3">
    <source>
    </source>
</evidence>
<evidence type="ECO:0000303" key="4">
    <source>
    </source>
</evidence>
<evidence type="ECO:0000305" key="5"/>
<evidence type="ECO:0000312" key="6">
    <source>
        <dbReference type="EMBL" id="CAL96981.1"/>
    </source>
</evidence>
<organism>
    <name type="scientific">Lactococcus lactis subsp. cremoris (strain MG1363)</name>
    <dbReference type="NCBI Taxonomy" id="416870"/>
    <lineage>
        <taxon>Bacteria</taxon>
        <taxon>Bacillati</taxon>
        <taxon>Bacillota</taxon>
        <taxon>Bacilli</taxon>
        <taxon>Lactobacillales</taxon>
        <taxon>Streptococcaceae</taxon>
        <taxon>Lactococcus</taxon>
        <taxon>Lactococcus cremoris subsp. cremoris</taxon>
    </lineage>
</organism>
<feature type="chain" id="PRO_0000442542" description="Serine permease SerP1">
    <location>
        <begin position="1"/>
        <end position="459"/>
    </location>
</feature>
<feature type="transmembrane region" description="Helical" evidence="1">
    <location>
        <begin position="19"/>
        <end position="39"/>
    </location>
</feature>
<feature type="transmembrane region" description="Helical" evidence="1">
    <location>
        <begin position="42"/>
        <end position="62"/>
    </location>
</feature>
<feature type="transmembrane region" description="Helical" evidence="1">
    <location>
        <begin position="97"/>
        <end position="117"/>
    </location>
</feature>
<feature type="transmembrane region" description="Helical" evidence="1">
    <location>
        <begin position="119"/>
        <end position="139"/>
    </location>
</feature>
<feature type="transmembrane region" description="Helical" evidence="1">
    <location>
        <begin position="153"/>
        <end position="173"/>
    </location>
</feature>
<feature type="transmembrane region" description="Helical" evidence="1">
    <location>
        <begin position="212"/>
        <end position="232"/>
    </location>
</feature>
<feature type="transmembrane region" description="Helical" evidence="1">
    <location>
        <begin position="254"/>
        <end position="274"/>
    </location>
</feature>
<feature type="transmembrane region" description="Helical" evidence="1">
    <location>
        <begin position="281"/>
        <end position="301"/>
    </location>
</feature>
<feature type="transmembrane region" description="Helical" evidence="1">
    <location>
        <begin position="341"/>
        <end position="361"/>
    </location>
</feature>
<feature type="transmembrane region" description="Helical" evidence="1">
    <location>
        <begin position="370"/>
        <end position="390"/>
    </location>
</feature>
<feature type="transmembrane region" description="Helical" evidence="1">
    <location>
        <begin position="412"/>
        <end position="432"/>
    </location>
</feature>
<feature type="transmembrane region" description="Helical" evidence="1">
    <location>
        <begin position="436"/>
        <end position="456"/>
    </location>
</feature>
<gene>
    <name evidence="4" type="primary">serP1</name>
    <name evidence="6" type="ordered locus">llmg_0376</name>
</gene>
<dbReference type="EMBL" id="AM406671">
    <property type="protein sequence ID" value="CAL96981.1"/>
    <property type="molecule type" value="Genomic_DNA"/>
</dbReference>
<dbReference type="RefSeq" id="WP_011834429.1">
    <property type="nucleotide sequence ID" value="NC_009004.1"/>
</dbReference>
<dbReference type="SMR" id="A2RI87"/>
<dbReference type="STRING" id="416870.llmg_0376"/>
<dbReference type="KEGG" id="llm:llmg_0376"/>
<dbReference type="eggNOG" id="COG1113">
    <property type="taxonomic scope" value="Bacteria"/>
</dbReference>
<dbReference type="HOGENOM" id="CLU_007946_9_3_9"/>
<dbReference type="OrthoDB" id="9780162at2"/>
<dbReference type="PhylomeDB" id="A2RI87"/>
<dbReference type="Proteomes" id="UP000000364">
    <property type="component" value="Chromosome"/>
</dbReference>
<dbReference type="GO" id="GO:0005886">
    <property type="term" value="C:plasma membrane"/>
    <property type="evidence" value="ECO:0007669"/>
    <property type="project" value="UniProtKB-SubCell"/>
</dbReference>
<dbReference type="GO" id="GO:0006865">
    <property type="term" value="P:amino acid transport"/>
    <property type="evidence" value="ECO:0007669"/>
    <property type="project" value="UniProtKB-KW"/>
</dbReference>
<dbReference type="GO" id="GO:0055085">
    <property type="term" value="P:transmembrane transport"/>
    <property type="evidence" value="ECO:0007669"/>
    <property type="project" value="InterPro"/>
</dbReference>
<dbReference type="FunFam" id="1.20.1740.10:FF:000001">
    <property type="entry name" value="Amino acid permease"/>
    <property type="match status" value="1"/>
</dbReference>
<dbReference type="Gene3D" id="1.20.1740.10">
    <property type="entry name" value="Amino acid/polyamine transporter I"/>
    <property type="match status" value="1"/>
</dbReference>
<dbReference type="InterPro" id="IPR004841">
    <property type="entry name" value="AA-permease/SLC12A_dom"/>
</dbReference>
<dbReference type="PANTHER" id="PTHR43495">
    <property type="entry name" value="GABA PERMEASE"/>
    <property type="match status" value="1"/>
</dbReference>
<dbReference type="PANTHER" id="PTHR43495:SF7">
    <property type="entry name" value="TRANSPORT PROTEIN YIFK-RELATED"/>
    <property type="match status" value="1"/>
</dbReference>
<dbReference type="Pfam" id="PF00324">
    <property type="entry name" value="AA_permease"/>
    <property type="match status" value="1"/>
</dbReference>
<dbReference type="PIRSF" id="PIRSF006060">
    <property type="entry name" value="AA_transporter"/>
    <property type="match status" value="1"/>
</dbReference>
<comment type="function">
    <text evidence="2 3">Transports L-serine, L-threonine and L-cysteine with high affinity (PubMed:23144255, PubMed:25535271). Stereoselective, with a strong preference for L-serine. Is the main L-serine transporter and is responsible for optimal growth in media containing free amino acids as the sole source of amino acids. Is also the main transporter for L-threonine (PubMed:25535271).</text>
</comment>
<comment type="biophysicochemical properties">
    <kinetics>
        <KM evidence="3">18 uM for L-serine</KM>
        <KM evidence="3">30 uM for L-threonine</KM>
        <Vmax evidence="3">57.0 nmol/min/mg enzyme with L-serine as substrate</Vmax>
        <Vmax evidence="3">54.0 nmol/min/mg enzyme with L-threonine as substrate</Vmax>
    </kinetics>
</comment>
<comment type="subcellular location">
    <subcellularLocation>
        <location evidence="5">Cell membrane</location>
        <topology evidence="1">Multi-pass membrane protein</topology>
    </subcellularLocation>
</comment>
<comment type="disruption phenotype">
    <text evidence="3">Deletion mutant shows a significant growth defect in medium that contains only free amino acids as a source of amino acids. Mutant shows a strong decrease in L-serine uptake and cannot transport L-threonine. Can still transport L-alanine. SerP1/serP2 double mutant is completely devoid of uptake activity of either L-serine, L-threonine or L-alanine.</text>
</comment>
<comment type="similarity">
    <text evidence="5">Belongs to the amino acid-polyamine-organocation (APC) superfamily. Amino acid transporter (AAT) (TC 2.A.3.1) family.</text>
</comment>
<proteinExistence type="evidence at protein level"/>
<keyword id="KW-0029">Amino-acid transport</keyword>
<keyword id="KW-1003">Cell membrane</keyword>
<keyword id="KW-0472">Membrane</keyword>
<keyword id="KW-0812">Transmembrane</keyword>
<keyword id="KW-1133">Transmembrane helix</keyword>
<keyword id="KW-0813">Transport</keyword>
<protein>
    <recommendedName>
        <fullName evidence="5">Serine permease SerP1</fullName>
    </recommendedName>
</protein>
<accession>A2RI87</accession>
<sequence length="459" mass="51331">MEDIQKNHEAQRGLQNRHIQLIAIAGTIGTGLFLGAGKTIQMTGPSVIFAYILIGIAMFFFLRTIGEMLYNDPSQHSFLNFVTKYSGIRTGYFTQWSYWLVIVFVCISELTAIGTYIQFWLPHLPLWLIEIVMLALLFGLNTLNSRFFGETEFWFAMIKVAAILGMIVTAIILVASNFHYTTVLSGKTVNDTASLNNIFDGFQLFPHGAWNFVGALQMVMFAFTSMEFIGMTAAETVNPKKSLPKAINQIPVRILLFYVGALLAIMAIFNWHYIPADKSPFVIVFQLIGIKWAAALINFVVLTSAASALNSSLFSATRNMYSLAKQHDKGRLTAFTKLSKAGIPINALYMATALSLLAPVLTLIPQIKNAFNFAASCTTNLFLVVYFITLYTYWQYRKSDDYNPNGFLTPKPTIAVPFIAIIFAIVFASLFFNADTFYPALGAIVWTLIFGLYSHFKKI</sequence>